<keyword id="KW-0027">Amidation</keyword>
<keyword id="KW-0968">Cytoplasmic vesicle</keyword>
<keyword id="KW-0903">Direct protein sequencing</keyword>
<keyword id="KW-0964">Secreted</keyword>
<sequence>GSHWAVGHLM</sequence>
<evidence type="ECO:0000250" key="1">
    <source>
        <dbReference type="UniProtKB" id="P07492"/>
    </source>
</evidence>
<evidence type="ECO:0000250" key="2">
    <source>
        <dbReference type="UniProtKB" id="P63153"/>
    </source>
</evidence>
<evidence type="ECO:0000250" key="3">
    <source>
        <dbReference type="UniProtKB" id="Q863C3"/>
    </source>
</evidence>
<evidence type="ECO:0000269" key="4">
    <source>
    </source>
</evidence>
<evidence type="ECO:0000305" key="5"/>
<comment type="function">
    <text evidence="2">Stimulates the release of gastrin and other gastrointestinal hormones.</text>
</comment>
<comment type="subcellular location">
    <subcellularLocation>
        <location evidence="1">Secreted</location>
    </subcellularLocation>
    <subcellularLocation>
        <location evidence="3">Cytoplasmic vesicle</location>
        <location evidence="3">Secretory vesicle lumen</location>
    </subcellularLocation>
</comment>
<comment type="similarity">
    <text evidence="5">Belongs to the bombesin/neuromedin-B/ranatensin family.</text>
</comment>
<organism>
    <name type="scientific">Pelophylax ridibundus</name>
    <name type="common">Marsh frog</name>
    <name type="synonym">Rana ridibunda</name>
    <dbReference type="NCBI Taxonomy" id="8406"/>
    <lineage>
        <taxon>Eukaryota</taxon>
        <taxon>Metazoa</taxon>
        <taxon>Chordata</taxon>
        <taxon>Craniata</taxon>
        <taxon>Vertebrata</taxon>
        <taxon>Euteleostomi</taxon>
        <taxon>Amphibia</taxon>
        <taxon>Batrachia</taxon>
        <taxon>Anura</taxon>
        <taxon>Neobatrachia</taxon>
        <taxon>Ranoidea</taxon>
        <taxon>Ranidae</taxon>
        <taxon>Pelophylax</taxon>
    </lineage>
</organism>
<dbReference type="PIR" id="PQ0177">
    <property type="entry name" value="PQ0177"/>
</dbReference>
<dbReference type="GO" id="GO:0031410">
    <property type="term" value="C:cytoplasmic vesicle"/>
    <property type="evidence" value="ECO:0007669"/>
    <property type="project" value="UniProtKB-KW"/>
</dbReference>
<dbReference type="GO" id="GO:0005576">
    <property type="term" value="C:extracellular region"/>
    <property type="evidence" value="ECO:0007669"/>
    <property type="project" value="UniProtKB-SubCell"/>
</dbReference>
<dbReference type="GO" id="GO:0007218">
    <property type="term" value="P:neuropeptide signaling pathway"/>
    <property type="evidence" value="ECO:0007669"/>
    <property type="project" value="InterPro"/>
</dbReference>
<dbReference type="InterPro" id="IPR000874">
    <property type="entry name" value="Bombesin"/>
</dbReference>
<dbReference type="Pfam" id="PF02044">
    <property type="entry name" value="Bombesin"/>
    <property type="match status" value="1"/>
</dbReference>
<dbReference type="PROSITE" id="PS00257">
    <property type="entry name" value="BOMBESIN"/>
    <property type="match status" value="1"/>
</dbReference>
<proteinExistence type="evidence at protein level"/>
<protein>
    <recommendedName>
        <fullName>Neuromedin-C</fullName>
    </recommendedName>
</protein>
<name>GRP_PELRI</name>
<reference key="1">
    <citation type="journal article" date="1991" name="Biochem. Biophys. Res. Commun.">
        <title>Primary structures of the bombesin-like neuropeptides in frog brain show that bombesin is not the amphibian gastrin-releasing peptide.</title>
        <authorList>
            <person name="Conlon J.M."/>
            <person name="O'Harte F."/>
            <person name="Vaudry H."/>
        </authorList>
    </citation>
    <scope>PROTEIN SEQUENCE</scope>
    <scope>AMIDATION AT MET-10</scope>
    <source>
        <tissue>Brain</tissue>
    </source>
</reference>
<feature type="peptide" id="PRO_0000043499" description="Neuromedin-C" evidence="4">
    <location>
        <begin position="1"/>
        <end position="10"/>
    </location>
</feature>
<feature type="modified residue" description="Methionine amide" evidence="4">
    <location>
        <position position="10"/>
    </location>
</feature>
<accession>P23260</accession>